<feature type="chain" id="PRO_0000050648" description="Gluconate operon transcriptional repressor">
    <location>
        <begin position="1"/>
        <end position="243"/>
    </location>
</feature>
<feature type="domain" description="HTH gntR-type" evidence="1">
    <location>
        <begin position="17"/>
        <end position="83"/>
    </location>
</feature>
<feature type="DNA-binding region" description="H-T-H motif" evidence="1">
    <location>
        <begin position="44"/>
        <end position="63"/>
    </location>
</feature>
<gene>
    <name type="primary">gntR</name>
    <name type="ordered locus">BSU40050</name>
</gene>
<accession>P10585</accession>
<comment type="function">
    <text>Transcriptional repressor of the gluconate operon (gntRKPZ), which encodes the proteins for gluconate utilization. Represses mRNA synthesis by binding to the gnt operator; the binding is suppressed by gluconate or glucono-delta-lactone.</text>
</comment>
<evidence type="ECO:0000255" key="1">
    <source>
        <dbReference type="PROSITE-ProRule" id="PRU00307"/>
    </source>
</evidence>
<sequence>MLDSKDLLYPAKWLSKASTGVRVAYELRMRIVSGLIESGTILSENTIAAEFSVSRSPVREALKILASEKIIRLERMGAVVIGLTEKKIAEIYDVRLLLETFVFERLVKIDIEPLVKDLSKILEMMKVSIKYEDADEFSFQDVLFHETIIRAIDHSYIQMIWNNLKPVMESFILLSMRVRLKEKYEDFTRILDNHELYIQAIKTKDRALMIQSLHQNFDDVQDKVEDLWLSQQMLAKGAEYNND</sequence>
<reference key="1">
    <citation type="journal article" date="1986" name="J. Biol. Chem.">
        <title>Organization and transcription of the gluconate operon, gnt, of Bacillus subtilis.</title>
        <authorList>
            <person name="Fujita Y."/>
            <person name="Fujita T."/>
            <person name="Miwa Y."/>
            <person name="Nihashi J."/>
            <person name="Aratani Y."/>
        </authorList>
    </citation>
    <scope>NUCLEOTIDE SEQUENCE [GENOMIC DNA]</scope>
</reference>
<reference key="2">
    <citation type="submission" date="1994-05" db="EMBL/GenBank/DDBJ databases">
        <authorList>
            <person name="Fujita Y."/>
        </authorList>
    </citation>
    <scope>NUCLEOTIDE SEQUENCE [GENOMIC DNA]</scope>
    <source>
        <strain>168 / BGSC1A1</strain>
    </source>
</reference>
<reference key="3">
    <citation type="journal article" date="1995" name="DNA Res.">
        <title>Cloning and sequencing of a 36-kb region of the Bacillus subtilis genome between the gnt and iol operons.</title>
        <authorList>
            <person name="Yoshida K."/>
            <person name="Seki S."/>
            <person name="Fujimura M."/>
            <person name="Miwa Y."/>
            <person name="Fujita Y."/>
        </authorList>
    </citation>
    <scope>NUCLEOTIDE SEQUENCE [GENOMIC DNA]</scope>
    <source>
        <strain>168 / BGSC1A1</strain>
    </source>
</reference>
<reference key="4">
    <citation type="journal article" date="1997" name="Nature">
        <title>The complete genome sequence of the Gram-positive bacterium Bacillus subtilis.</title>
        <authorList>
            <person name="Kunst F."/>
            <person name="Ogasawara N."/>
            <person name="Moszer I."/>
            <person name="Albertini A.M."/>
            <person name="Alloni G."/>
            <person name="Azevedo V."/>
            <person name="Bertero M.G."/>
            <person name="Bessieres P."/>
            <person name="Bolotin A."/>
            <person name="Borchert S."/>
            <person name="Borriss R."/>
            <person name="Boursier L."/>
            <person name="Brans A."/>
            <person name="Braun M."/>
            <person name="Brignell S.C."/>
            <person name="Bron S."/>
            <person name="Brouillet S."/>
            <person name="Bruschi C.V."/>
            <person name="Caldwell B."/>
            <person name="Capuano V."/>
            <person name="Carter N.M."/>
            <person name="Choi S.-K."/>
            <person name="Codani J.-J."/>
            <person name="Connerton I.F."/>
            <person name="Cummings N.J."/>
            <person name="Daniel R.A."/>
            <person name="Denizot F."/>
            <person name="Devine K.M."/>
            <person name="Duesterhoeft A."/>
            <person name="Ehrlich S.D."/>
            <person name="Emmerson P.T."/>
            <person name="Entian K.-D."/>
            <person name="Errington J."/>
            <person name="Fabret C."/>
            <person name="Ferrari E."/>
            <person name="Foulger D."/>
            <person name="Fritz C."/>
            <person name="Fujita M."/>
            <person name="Fujita Y."/>
            <person name="Fuma S."/>
            <person name="Galizzi A."/>
            <person name="Galleron N."/>
            <person name="Ghim S.-Y."/>
            <person name="Glaser P."/>
            <person name="Goffeau A."/>
            <person name="Golightly E.J."/>
            <person name="Grandi G."/>
            <person name="Guiseppi G."/>
            <person name="Guy B.J."/>
            <person name="Haga K."/>
            <person name="Haiech J."/>
            <person name="Harwood C.R."/>
            <person name="Henaut A."/>
            <person name="Hilbert H."/>
            <person name="Holsappel S."/>
            <person name="Hosono S."/>
            <person name="Hullo M.-F."/>
            <person name="Itaya M."/>
            <person name="Jones L.-M."/>
            <person name="Joris B."/>
            <person name="Karamata D."/>
            <person name="Kasahara Y."/>
            <person name="Klaerr-Blanchard M."/>
            <person name="Klein C."/>
            <person name="Kobayashi Y."/>
            <person name="Koetter P."/>
            <person name="Koningstein G."/>
            <person name="Krogh S."/>
            <person name="Kumano M."/>
            <person name="Kurita K."/>
            <person name="Lapidus A."/>
            <person name="Lardinois S."/>
            <person name="Lauber J."/>
            <person name="Lazarevic V."/>
            <person name="Lee S.-M."/>
            <person name="Levine A."/>
            <person name="Liu H."/>
            <person name="Masuda S."/>
            <person name="Mauel C."/>
            <person name="Medigue C."/>
            <person name="Medina N."/>
            <person name="Mellado R.P."/>
            <person name="Mizuno M."/>
            <person name="Moestl D."/>
            <person name="Nakai S."/>
            <person name="Noback M."/>
            <person name="Noone D."/>
            <person name="O'Reilly M."/>
            <person name="Ogawa K."/>
            <person name="Ogiwara A."/>
            <person name="Oudega B."/>
            <person name="Park S.-H."/>
            <person name="Parro V."/>
            <person name="Pohl T.M."/>
            <person name="Portetelle D."/>
            <person name="Porwollik S."/>
            <person name="Prescott A.M."/>
            <person name="Presecan E."/>
            <person name="Pujic P."/>
            <person name="Purnelle B."/>
            <person name="Rapoport G."/>
            <person name="Rey M."/>
            <person name="Reynolds S."/>
            <person name="Rieger M."/>
            <person name="Rivolta C."/>
            <person name="Rocha E."/>
            <person name="Roche B."/>
            <person name="Rose M."/>
            <person name="Sadaie Y."/>
            <person name="Sato T."/>
            <person name="Scanlan E."/>
            <person name="Schleich S."/>
            <person name="Schroeter R."/>
            <person name="Scoffone F."/>
            <person name="Sekiguchi J."/>
            <person name="Sekowska A."/>
            <person name="Seror S.J."/>
            <person name="Serror P."/>
            <person name="Shin B.-S."/>
            <person name="Soldo B."/>
            <person name="Sorokin A."/>
            <person name="Tacconi E."/>
            <person name="Takagi T."/>
            <person name="Takahashi H."/>
            <person name="Takemaru K."/>
            <person name="Takeuchi M."/>
            <person name="Tamakoshi A."/>
            <person name="Tanaka T."/>
            <person name="Terpstra P."/>
            <person name="Tognoni A."/>
            <person name="Tosato V."/>
            <person name="Uchiyama S."/>
            <person name="Vandenbol M."/>
            <person name="Vannier F."/>
            <person name="Vassarotti A."/>
            <person name="Viari A."/>
            <person name="Wambutt R."/>
            <person name="Wedler E."/>
            <person name="Wedler H."/>
            <person name="Weitzenegger T."/>
            <person name="Winters P."/>
            <person name="Wipat A."/>
            <person name="Yamamoto H."/>
            <person name="Yamane K."/>
            <person name="Yasumoto K."/>
            <person name="Yata K."/>
            <person name="Yoshida K."/>
            <person name="Yoshikawa H.-F."/>
            <person name="Zumstein E."/>
            <person name="Yoshikawa H."/>
            <person name="Danchin A."/>
        </authorList>
    </citation>
    <scope>NUCLEOTIDE SEQUENCE [LARGE SCALE GENOMIC DNA]</scope>
    <source>
        <strain>168</strain>
    </source>
</reference>
<reference key="5">
    <citation type="journal article" date="1986" name="Nucleic Acids Res.">
        <title>Identification and nucleotide sequence of the promoter region of the Bacillus subtilis gluconate operon.</title>
        <authorList>
            <person name="Fujita Y."/>
            <person name="Fujita T."/>
        </authorList>
    </citation>
    <scope>NUCLEOTIDE SEQUENCE [GENOMIC DNA] OF 1-169</scope>
</reference>
<reference key="6">
    <citation type="journal article" date="1993" name="J. Mol. Biol.">
        <title>Missense mutations in the Bacillus subtilis gnt repressor that diminish operator binding ability.</title>
        <authorList>
            <person name="Yoshida K."/>
            <person name="Fujita Y."/>
            <person name="Sarai A."/>
        </authorList>
    </citation>
    <scope>MUTAGENESIS</scope>
</reference>
<organism>
    <name type="scientific">Bacillus subtilis (strain 168)</name>
    <dbReference type="NCBI Taxonomy" id="224308"/>
    <lineage>
        <taxon>Bacteria</taxon>
        <taxon>Bacillati</taxon>
        <taxon>Bacillota</taxon>
        <taxon>Bacilli</taxon>
        <taxon>Bacillales</taxon>
        <taxon>Bacillaceae</taxon>
        <taxon>Bacillus</taxon>
    </lineage>
</organism>
<proteinExistence type="predicted"/>
<name>GNTR_BACSU</name>
<protein>
    <recommendedName>
        <fullName>Gluconate operon transcriptional repressor</fullName>
    </recommendedName>
    <alternativeName>
        <fullName>P28 protein</fullName>
    </alternativeName>
</protein>
<keyword id="KW-0238">DNA-binding</keyword>
<keyword id="KW-0311">Gluconate utilization</keyword>
<keyword id="KW-1185">Reference proteome</keyword>
<keyword id="KW-0678">Repressor</keyword>
<keyword id="KW-0804">Transcription</keyword>
<keyword id="KW-0805">Transcription regulation</keyword>
<dbReference type="EMBL" id="J02584">
    <property type="protein sequence ID" value="AAA56924.1"/>
    <property type="molecule type" value="Genomic_DNA"/>
</dbReference>
<dbReference type="EMBL" id="AB005554">
    <property type="protein sequence ID" value="BAA21579.1"/>
    <property type="molecule type" value="Genomic_DNA"/>
</dbReference>
<dbReference type="EMBL" id="X03510">
    <property type="protein sequence ID" value="CAA27222.1"/>
    <property type="molecule type" value="Genomic_DNA"/>
</dbReference>
<dbReference type="EMBL" id="AL009126">
    <property type="protein sequence ID" value="CAB16042.1"/>
    <property type="molecule type" value="Genomic_DNA"/>
</dbReference>
<dbReference type="PIR" id="C26190">
    <property type="entry name" value="C26190"/>
</dbReference>
<dbReference type="RefSeq" id="NP_391885.1">
    <property type="nucleotide sequence ID" value="NC_000964.3"/>
</dbReference>
<dbReference type="RefSeq" id="WP_003243132.1">
    <property type="nucleotide sequence ID" value="NZ_OZ025638.1"/>
</dbReference>
<dbReference type="SMR" id="P10585"/>
<dbReference type="FunCoup" id="P10585">
    <property type="interactions" value="50"/>
</dbReference>
<dbReference type="STRING" id="224308.BSU40050"/>
<dbReference type="PaxDb" id="224308-BSU40050"/>
<dbReference type="EnsemblBacteria" id="CAB16042">
    <property type="protein sequence ID" value="CAB16042"/>
    <property type="gene ID" value="BSU_40050"/>
</dbReference>
<dbReference type="GeneID" id="937710"/>
<dbReference type="KEGG" id="bsu:BSU40050"/>
<dbReference type="PATRIC" id="fig|224308.179.peg.4332"/>
<dbReference type="eggNOG" id="COG1802">
    <property type="taxonomic scope" value="Bacteria"/>
</dbReference>
<dbReference type="InParanoid" id="P10585"/>
<dbReference type="OrthoDB" id="368257at2"/>
<dbReference type="PhylomeDB" id="P10585"/>
<dbReference type="BioCyc" id="BSUB:BSU40050-MONOMER"/>
<dbReference type="Proteomes" id="UP000001570">
    <property type="component" value="Chromosome"/>
</dbReference>
<dbReference type="GO" id="GO:0003677">
    <property type="term" value="F:DNA binding"/>
    <property type="evidence" value="ECO:0007669"/>
    <property type="project" value="UniProtKB-KW"/>
</dbReference>
<dbReference type="GO" id="GO:0003700">
    <property type="term" value="F:DNA-binding transcription factor activity"/>
    <property type="evidence" value="ECO:0007669"/>
    <property type="project" value="InterPro"/>
</dbReference>
<dbReference type="GO" id="GO:0019521">
    <property type="term" value="P:D-gluconate metabolic process"/>
    <property type="evidence" value="ECO:0007669"/>
    <property type="project" value="UniProtKB-KW"/>
</dbReference>
<dbReference type="Gene3D" id="1.20.120.530">
    <property type="entry name" value="GntR ligand-binding domain-like"/>
    <property type="match status" value="1"/>
</dbReference>
<dbReference type="Gene3D" id="1.10.10.10">
    <property type="entry name" value="Winged helix-like DNA-binding domain superfamily/Winged helix DNA-binding domain"/>
    <property type="match status" value="1"/>
</dbReference>
<dbReference type="InterPro" id="IPR011711">
    <property type="entry name" value="GntR_C"/>
</dbReference>
<dbReference type="InterPro" id="IPR008920">
    <property type="entry name" value="TF_FadR/GntR_C"/>
</dbReference>
<dbReference type="InterPro" id="IPR000524">
    <property type="entry name" value="Tscrpt_reg_HTH_GntR"/>
</dbReference>
<dbReference type="InterPro" id="IPR036388">
    <property type="entry name" value="WH-like_DNA-bd_sf"/>
</dbReference>
<dbReference type="InterPro" id="IPR036390">
    <property type="entry name" value="WH_DNA-bd_sf"/>
</dbReference>
<dbReference type="PANTHER" id="PTHR43537:SF24">
    <property type="entry name" value="GLUCONATE OPERON TRANSCRIPTIONAL REPRESSOR"/>
    <property type="match status" value="1"/>
</dbReference>
<dbReference type="PANTHER" id="PTHR43537">
    <property type="entry name" value="TRANSCRIPTIONAL REGULATOR, GNTR FAMILY"/>
    <property type="match status" value="1"/>
</dbReference>
<dbReference type="Pfam" id="PF07729">
    <property type="entry name" value="FCD"/>
    <property type="match status" value="1"/>
</dbReference>
<dbReference type="Pfam" id="PF00392">
    <property type="entry name" value="GntR"/>
    <property type="match status" value="1"/>
</dbReference>
<dbReference type="PRINTS" id="PR00035">
    <property type="entry name" value="HTHGNTR"/>
</dbReference>
<dbReference type="SMART" id="SM00895">
    <property type="entry name" value="FCD"/>
    <property type="match status" value="1"/>
</dbReference>
<dbReference type="SMART" id="SM00345">
    <property type="entry name" value="HTH_GNTR"/>
    <property type="match status" value="1"/>
</dbReference>
<dbReference type="SUPFAM" id="SSF48008">
    <property type="entry name" value="GntR ligand-binding domain-like"/>
    <property type="match status" value="1"/>
</dbReference>
<dbReference type="SUPFAM" id="SSF46785">
    <property type="entry name" value="Winged helix' DNA-binding domain"/>
    <property type="match status" value="1"/>
</dbReference>
<dbReference type="PROSITE" id="PS50949">
    <property type="entry name" value="HTH_GNTR"/>
    <property type="match status" value="1"/>
</dbReference>